<name>PSA_KINRD</name>
<protein>
    <recommendedName>
        <fullName evidence="1">Proteasome subunit alpha</fullName>
    </recommendedName>
    <alternativeName>
        <fullName evidence="1">20S proteasome alpha subunit</fullName>
    </alternativeName>
    <alternativeName>
        <fullName evidence="1">Proteasome core protein PrcA</fullName>
    </alternativeName>
</protein>
<comment type="function">
    <text evidence="1">Component of the proteasome core, a large protease complex with broad specificity involved in protein degradation.</text>
</comment>
<comment type="activity regulation">
    <text evidence="1">The formation of the proteasomal ATPase ARC-20S proteasome complex, likely via the docking of the C-termini of ARC into the intersubunit pockets in the alpha-rings, may trigger opening of the gate for substrate entry. Interconversion between the open-gate and close-gate conformations leads to a dynamic regulation of the 20S proteasome proteolysis activity.</text>
</comment>
<comment type="pathway">
    <text evidence="1">Protein degradation; proteasomal Pup-dependent pathway.</text>
</comment>
<comment type="subunit">
    <text evidence="1">The 20S proteasome core is composed of 14 alpha and 14 beta subunits that assemble into four stacked heptameric rings, resulting in a barrel-shaped structure. The two inner rings, each composed of seven catalytic beta subunits, are sandwiched by two outer rings, each composed of seven alpha subunits. The catalytic chamber with the active sites is on the inside of the barrel. Has a gated structure, the ends of the cylinder being occluded by the N-termini of the alpha-subunits. Is capped by the proteasome-associated ATPase, ARC.</text>
</comment>
<comment type="subcellular location">
    <subcellularLocation>
        <location evidence="1">Cytoplasm</location>
    </subcellularLocation>
</comment>
<comment type="similarity">
    <text evidence="1">Belongs to the peptidase T1A family.</text>
</comment>
<dbReference type="EMBL" id="CP000750">
    <property type="protein sequence ID" value="ABS03360.1"/>
    <property type="molecule type" value="Genomic_DNA"/>
</dbReference>
<dbReference type="RefSeq" id="WP_011981501.1">
    <property type="nucleotide sequence ID" value="NC_009664.2"/>
</dbReference>
<dbReference type="SMR" id="A6W971"/>
<dbReference type="STRING" id="266940.Krad_1874"/>
<dbReference type="MEROPS" id="T01.980"/>
<dbReference type="KEGG" id="kra:Krad_1874"/>
<dbReference type="eggNOG" id="COG0638">
    <property type="taxonomic scope" value="Bacteria"/>
</dbReference>
<dbReference type="HOGENOM" id="CLU_071031_0_0_11"/>
<dbReference type="OrthoDB" id="9775643at2"/>
<dbReference type="UniPathway" id="UPA00997"/>
<dbReference type="Proteomes" id="UP000001116">
    <property type="component" value="Chromosome"/>
</dbReference>
<dbReference type="GO" id="GO:0005737">
    <property type="term" value="C:cytoplasm"/>
    <property type="evidence" value="ECO:0007669"/>
    <property type="project" value="UniProtKB-SubCell"/>
</dbReference>
<dbReference type="GO" id="GO:0019773">
    <property type="term" value="C:proteasome core complex, alpha-subunit complex"/>
    <property type="evidence" value="ECO:0007669"/>
    <property type="project" value="UniProtKB-UniRule"/>
</dbReference>
<dbReference type="GO" id="GO:0004298">
    <property type="term" value="F:threonine-type endopeptidase activity"/>
    <property type="evidence" value="ECO:0007669"/>
    <property type="project" value="InterPro"/>
</dbReference>
<dbReference type="GO" id="GO:0019941">
    <property type="term" value="P:modification-dependent protein catabolic process"/>
    <property type="evidence" value="ECO:0007669"/>
    <property type="project" value="UniProtKB-UniRule"/>
</dbReference>
<dbReference type="GO" id="GO:0010498">
    <property type="term" value="P:proteasomal protein catabolic process"/>
    <property type="evidence" value="ECO:0007669"/>
    <property type="project" value="UniProtKB-UniRule"/>
</dbReference>
<dbReference type="CDD" id="cd01906">
    <property type="entry name" value="proteasome_protease_HslV"/>
    <property type="match status" value="1"/>
</dbReference>
<dbReference type="Gene3D" id="3.60.20.10">
    <property type="entry name" value="Glutamine Phosphoribosylpyrophosphate, subunit 1, domain 1"/>
    <property type="match status" value="1"/>
</dbReference>
<dbReference type="HAMAP" id="MF_00289_B">
    <property type="entry name" value="Proteasome_A_B"/>
    <property type="match status" value="1"/>
</dbReference>
<dbReference type="InterPro" id="IPR029055">
    <property type="entry name" value="Ntn_hydrolases_N"/>
</dbReference>
<dbReference type="InterPro" id="IPR050115">
    <property type="entry name" value="Proteasome_alpha"/>
</dbReference>
<dbReference type="InterPro" id="IPR023332">
    <property type="entry name" value="Proteasome_alpha-type"/>
</dbReference>
<dbReference type="InterPro" id="IPR022296">
    <property type="entry name" value="Proteasome_asu_bac"/>
</dbReference>
<dbReference type="InterPro" id="IPR001353">
    <property type="entry name" value="Proteasome_sua/b"/>
</dbReference>
<dbReference type="NCBIfam" id="TIGR03691">
    <property type="entry name" value="20S_bact_alpha"/>
    <property type="match status" value="1"/>
</dbReference>
<dbReference type="PANTHER" id="PTHR11599">
    <property type="entry name" value="PROTEASOME SUBUNIT ALPHA/BETA"/>
    <property type="match status" value="1"/>
</dbReference>
<dbReference type="Pfam" id="PF00227">
    <property type="entry name" value="Proteasome"/>
    <property type="match status" value="1"/>
</dbReference>
<dbReference type="SUPFAM" id="SSF56235">
    <property type="entry name" value="N-terminal nucleophile aminohydrolases (Ntn hydrolases)"/>
    <property type="match status" value="1"/>
</dbReference>
<dbReference type="PROSITE" id="PS51475">
    <property type="entry name" value="PROTEASOME_ALPHA_2"/>
    <property type="match status" value="1"/>
</dbReference>
<feature type="chain" id="PRO_0000397143" description="Proteasome subunit alpha">
    <location>
        <begin position="1"/>
        <end position="237"/>
    </location>
</feature>
<accession>A6W971</accession>
<evidence type="ECO:0000255" key="1">
    <source>
        <dbReference type="HAMAP-Rule" id="MF_00289"/>
    </source>
</evidence>
<gene>
    <name evidence="1" type="primary">prcA</name>
    <name type="ordered locus">Krad_1874</name>
</gene>
<keyword id="KW-0963">Cytoplasm</keyword>
<keyword id="KW-0647">Proteasome</keyword>
<keyword id="KW-1185">Reference proteome</keyword>
<reference key="1">
    <citation type="journal article" date="2008" name="PLoS ONE">
        <title>Survival in nuclear waste, extreme resistance, and potential applications gleaned from the genome sequence of Kineococcus radiotolerans SRS30216.</title>
        <authorList>
            <person name="Bagwell C.E."/>
            <person name="Bhat S."/>
            <person name="Hawkins G.M."/>
            <person name="Smith B.W."/>
            <person name="Biswas T."/>
            <person name="Hoover T.R."/>
            <person name="Saunders E."/>
            <person name="Han C.S."/>
            <person name="Tsodikov O.V."/>
            <person name="Shimkets L.J."/>
        </authorList>
    </citation>
    <scope>NUCLEOTIDE SEQUENCE [LARGE SCALE GENOMIC DNA]</scope>
    <source>
        <strain>ATCC BAA-149 / DSM 14245 / SRS30216</strain>
    </source>
</reference>
<proteinExistence type="inferred from homology"/>
<sequence>MSTPFYVSPEQLMKDKADYARKGIARGRAVVVLAHADGIAFVSENASRALHKISEIYDRVAFAAVGKYNEFENLRVAGVRYADVRGYSYDRSDVTARGLANAYAQTLGAIFTTESKPYEVELVVAEVGRRPETDQIYRLTYDGSVADEHGFVAMGGSADQISAKLRERWHAGLTLAEALRLAVEALGSDAAAEAAGTGPREIAPDHLEVAVLDRTRERRTFRRLSGPVLAGLLAGTG</sequence>
<organism>
    <name type="scientific">Kineococcus radiotolerans (strain ATCC BAA-149 / DSM 14245 / SRS30216)</name>
    <dbReference type="NCBI Taxonomy" id="266940"/>
    <lineage>
        <taxon>Bacteria</taxon>
        <taxon>Bacillati</taxon>
        <taxon>Actinomycetota</taxon>
        <taxon>Actinomycetes</taxon>
        <taxon>Kineosporiales</taxon>
        <taxon>Kineosporiaceae</taxon>
        <taxon>Kineococcus</taxon>
    </lineage>
</organism>